<name>TAMA_SALTS</name>
<comment type="function">
    <text evidence="1">Component of the translocation and assembly module (TAM), which facilitates the insertion and assembly of specific beta-barrel proteins into the outer membrane.</text>
</comment>
<comment type="subunit">
    <text evidence="1">Interacts with TamB to form the translocation and assembly module (TAM).</text>
</comment>
<comment type="subcellular location">
    <subcellularLocation>
        <location evidence="1">Cell outer membrane</location>
    </subcellularLocation>
</comment>
<comment type="disruption phenotype">
    <text evidence="4">Significantly reduced survival in human serum, probably due to complement-mediated killing.</text>
</comment>
<comment type="similarity">
    <text evidence="5">Belongs to the TamA family.</text>
</comment>
<dbReference type="EMBL" id="FQ312003">
    <property type="protein sequence ID" value="CBW20428.1"/>
    <property type="molecule type" value="Genomic_DNA"/>
</dbReference>
<dbReference type="RefSeq" id="WP_001120231.1">
    <property type="nucleotide sequence ID" value="NZ_QASL01000004.1"/>
</dbReference>
<dbReference type="SMR" id="E1WAU4"/>
<dbReference type="KEGG" id="sey:SL1344_4342"/>
<dbReference type="PATRIC" id="fig|216597.6.peg.4835"/>
<dbReference type="HOGENOM" id="CLU_018618_1_0_6"/>
<dbReference type="BioCyc" id="SENT216597:SL1344_RS22630-MONOMER"/>
<dbReference type="Proteomes" id="UP000008962">
    <property type="component" value="Chromosome"/>
</dbReference>
<dbReference type="GO" id="GO:0009279">
    <property type="term" value="C:cell outer membrane"/>
    <property type="evidence" value="ECO:0007669"/>
    <property type="project" value="UniProtKB-SubCell"/>
</dbReference>
<dbReference type="GO" id="GO:0097347">
    <property type="term" value="C:TAM protein secretion complex"/>
    <property type="evidence" value="ECO:0007669"/>
    <property type="project" value="TreeGrafter"/>
</dbReference>
<dbReference type="GO" id="GO:0009306">
    <property type="term" value="P:protein secretion"/>
    <property type="evidence" value="ECO:0007669"/>
    <property type="project" value="TreeGrafter"/>
</dbReference>
<dbReference type="FunFam" id="2.40.160.50:FF:000003">
    <property type="entry name" value="Outer membrane protein, OMP85 family"/>
    <property type="match status" value="1"/>
</dbReference>
<dbReference type="FunFam" id="3.10.20.310:FF:000008">
    <property type="entry name" value="Outer membrane protein, OMP85 family"/>
    <property type="match status" value="1"/>
</dbReference>
<dbReference type="Gene3D" id="3.10.20.310">
    <property type="entry name" value="membrane protein fhac"/>
    <property type="match status" value="3"/>
</dbReference>
<dbReference type="Gene3D" id="2.40.160.50">
    <property type="entry name" value="membrane protein fhac: a member of the omp85/tpsb transporter family"/>
    <property type="match status" value="1"/>
</dbReference>
<dbReference type="InterPro" id="IPR000184">
    <property type="entry name" value="Bac_surfAg_D15"/>
</dbReference>
<dbReference type="InterPro" id="IPR010827">
    <property type="entry name" value="BamA/TamA_POTRA"/>
</dbReference>
<dbReference type="InterPro" id="IPR039910">
    <property type="entry name" value="D15-like"/>
</dbReference>
<dbReference type="InterPro" id="IPR034746">
    <property type="entry name" value="POTRA"/>
</dbReference>
<dbReference type="InterPro" id="IPR035243">
    <property type="entry name" value="TamA_POTRA_Dom_1"/>
</dbReference>
<dbReference type="PANTHER" id="PTHR12815">
    <property type="entry name" value="SORTING AND ASSEMBLY MACHINERY SAMM50 PROTEIN FAMILY MEMBER"/>
    <property type="match status" value="1"/>
</dbReference>
<dbReference type="PANTHER" id="PTHR12815:SF47">
    <property type="entry name" value="TRANSLOCATION AND ASSEMBLY MODULE SUBUNIT TAMA"/>
    <property type="match status" value="1"/>
</dbReference>
<dbReference type="Pfam" id="PF01103">
    <property type="entry name" value="Omp85"/>
    <property type="match status" value="1"/>
</dbReference>
<dbReference type="Pfam" id="PF07244">
    <property type="entry name" value="POTRA"/>
    <property type="match status" value="1"/>
</dbReference>
<dbReference type="Pfam" id="PF17243">
    <property type="entry name" value="POTRA_TamA_1"/>
    <property type="match status" value="1"/>
</dbReference>
<dbReference type="PROSITE" id="PS51779">
    <property type="entry name" value="POTRA"/>
    <property type="match status" value="1"/>
</dbReference>
<proteinExistence type="inferred from homology"/>
<accession>E1WAU4</accession>
<feature type="signal peptide" evidence="2">
    <location>
        <begin position="1"/>
        <end position="21"/>
    </location>
</feature>
<feature type="chain" id="PRO_0000418089" description="Translocation and assembly module subunit TamA">
    <location>
        <begin position="22"/>
        <end position="577"/>
    </location>
</feature>
<feature type="transmembrane region" description="Beta stranded" evidence="1">
    <location>
        <begin position="265"/>
        <end position="276"/>
    </location>
</feature>
<feature type="transmembrane region" description="Beta stranded" evidence="1">
    <location>
        <begin position="279"/>
        <end position="288"/>
    </location>
</feature>
<feature type="transmembrane region" description="Beta stranded" evidence="1">
    <location>
        <begin position="297"/>
        <end position="306"/>
    </location>
</feature>
<feature type="transmembrane region" description="Beta stranded" evidence="1">
    <location>
        <begin position="309"/>
        <end position="317"/>
    </location>
</feature>
<feature type="transmembrane region" description="Beta stranded" evidence="1">
    <location>
        <begin position="327"/>
        <end position="336"/>
    </location>
</feature>
<feature type="transmembrane region" description="Beta stranded" evidence="1">
    <location>
        <begin position="347"/>
        <end position="356"/>
    </location>
</feature>
<feature type="transmembrane region" description="Beta stranded" evidence="1">
    <location>
        <begin position="361"/>
        <end position="370"/>
    </location>
</feature>
<feature type="transmembrane region" description="Beta stranded" evidence="1">
    <location>
        <begin position="387"/>
        <end position="395"/>
    </location>
</feature>
<feature type="transmembrane region" description="Beta stranded" evidence="1">
    <location>
        <begin position="406"/>
        <end position="415"/>
    </location>
</feature>
<feature type="transmembrane region" description="Beta stranded" evidence="1">
    <location>
        <begin position="428"/>
        <end position="437"/>
    </location>
</feature>
<feature type="transmembrane region" description="Beta stranded" evidence="1">
    <location>
        <begin position="444"/>
        <end position="453"/>
    </location>
</feature>
<feature type="transmembrane region" description="Beta stranded" evidence="1">
    <location>
        <begin position="500"/>
        <end position="508"/>
    </location>
</feature>
<feature type="transmembrane region" description="Beta stranded" evidence="1">
    <location>
        <begin position="514"/>
        <end position="523"/>
    </location>
</feature>
<feature type="transmembrane region" description="Beta stranded" evidence="1">
    <location>
        <begin position="536"/>
        <end position="545"/>
    </location>
</feature>
<feature type="transmembrane region" description="Beta stranded" evidence="1">
    <location>
        <begin position="549"/>
        <end position="557"/>
    </location>
</feature>
<feature type="transmembrane region" description="Beta stranded" evidence="1">
    <location>
        <begin position="568"/>
        <end position="577"/>
    </location>
</feature>
<feature type="domain" description="POTRA" evidence="3">
    <location>
        <begin position="187"/>
        <end position="263"/>
    </location>
</feature>
<gene>
    <name type="primary">tamA</name>
    <name type="ordered locus">SL1344_4342</name>
</gene>
<organism>
    <name type="scientific">Salmonella typhimurium (strain SL1344)</name>
    <dbReference type="NCBI Taxonomy" id="216597"/>
    <lineage>
        <taxon>Bacteria</taxon>
        <taxon>Pseudomonadati</taxon>
        <taxon>Pseudomonadota</taxon>
        <taxon>Gammaproteobacteria</taxon>
        <taxon>Enterobacterales</taxon>
        <taxon>Enterobacteriaceae</taxon>
        <taxon>Salmonella</taxon>
    </lineage>
</organism>
<evidence type="ECO:0000250" key="1">
    <source>
        <dbReference type="UniProtKB" id="P0ADE4"/>
    </source>
</evidence>
<evidence type="ECO:0000255" key="2"/>
<evidence type="ECO:0000255" key="3">
    <source>
        <dbReference type="PROSITE-ProRule" id="PRU01115"/>
    </source>
</evidence>
<evidence type="ECO:0000269" key="4">
    <source>
    </source>
</evidence>
<evidence type="ECO:0000305" key="5"/>
<reference key="1">
    <citation type="journal article" date="2012" name="Proc. Natl. Acad. Sci. U.S.A.">
        <title>The transcriptional landscape and small RNAs of Salmonella enterica serovar Typhimurium.</title>
        <authorList>
            <person name="Kroger C."/>
            <person name="Dillon S.C."/>
            <person name="Cameron A.D."/>
            <person name="Papenfort K."/>
            <person name="Sivasankaran S.K."/>
            <person name="Hokamp K."/>
            <person name="Chao Y."/>
            <person name="Sittka A."/>
            <person name="Hebrard M."/>
            <person name="Handler K."/>
            <person name="Colgan A."/>
            <person name="Leekitcharoenphon P."/>
            <person name="Langridge G.C."/>
            <person name="Lohan A.J."/>
            <person name="Loftus B."/>
            <person name="Lucchini S."/>
            <person name="Ussery D.W."/>
            <person name="Dorman C.J."/>
            <person name="Thomson N.R."/>
            <person name="Vogel J."/>
            <person name="Hinton J.C."/>
        </authorList>
    </citation>
    <scope>NUCLEOTIDE SEQUENCE [LARGE SCALE GENOMIC DNA]</scope>
    <source>
        <strain>SL1344</strain>
    </source>
</reference>
<reference key="2">
    <citation type="journal article" date="2012" name="Nat. Struct. Mol. Biol.">
        <title>Discovery of an archetypal protein transport system in bacterial outer membranes.</title>
        <authorList>
            <person name="Selkrig J."/>
            <person name="Mosbahi K."/>
            <person name="Webb C.T."/>
            <person name="Belousoff M.J."/>
            <person name="Perry A.J."/>
            <person name="Wells T.J."/>
            <person name="Morris F."/>
            <person name="Leyton D.L."/>
            <person name="Totsika M."/>
            <person name="Phan M.D."/>
            <person name="Celik N."/>
            <person name="Kelly M."/>
            <person name="Oates C."/>
            <person name="Hartland E.L."/>
            <person name="Robins-Browne R.M."/>
            <person name="Ramarathinam S.H."/>
            <person name="Purcell A.W."/>
            <person name="Schembri M.A."/>
            <person name="Strugnell R.A."/>
            <person name="Henderson I.R."/>
            <person name="Walker D."/>
            <person name="Lithgow T."/>
        </authorList>
    </citation>
    <scope>DISRUPTION PHENOTYPE</scope>
    <source>
        <strain>SL1344</strain>
    </source>
</reference>
<keyword id="KW-0998">Cell outer membrane</keyword>
<keyword id="KW-0472">Membrane</keyword>
<keyword id="KW-0732">Signal</keyword>
<keyword id="KW-0812">Transmembrane</keyword>
<keyword id="KW-1134">Transmembrane beta strand</keyword>
<keyword id="KW-0843">Virulence</keyword>
<sequence>MPHIRQLCWVSLLCLSSSAVAANVRLKVEGLSGELEKNVRAQLSTIQSDEVTPDRRFRARVDDAIREGLKALGYYEPTIKFDLLPPPAKGRQVLIARVTPGQPVLIGGTEVILRGGARTDKDYLALLKTRPAIGTVLNQGDYDNFKKSLTSVSLRKGYFDSEFIKSQLGIALGRHQAFWDIDYDSGERYRFGPVTFEGSQIRDEYLQNLLPFKEGDEYESKDLAELNRRLSATGWFNSVVVAPEFEKSRKTKILPLKGVVSPRTENTIETGVGYSTDVGPRVKASWKKPWMNSYGHSLTTSTSISAPEQVLDFSYKMPLLKNPLEQYYLVQGGFKRTDLNDTEQDSTTLAVSRYWDLSSGWQRAINLRWSFDHFTQGNVTNTTMLFYPGVMISRTRSRGGLMPTWGDSQRYSVDYSNTAWGSDVDFSVLQAQNVWIRTLYDRHRFVMRANLGWIETGDFDKVPPDLRFFAGGDRSIRGYKYKSISPKDSDGNLKGASKLATGSLEYQYNVTGKWWGAVFVDSGEAVSDIRRSDFKTGTGVGVRWASPVGPVKLDFAVPVGDKDEHGLQFYIGLGPEL</sequence>
<protein>
    <recommendedName>
        <fullName evidence="5">Translocation and assembly module subunit TamA</fullName>
    </recommendedName>
    <alternativeName>
        <fullName>Autotransporter assembly factor TamA</fullName>
    </alternativeName>
</protein>